<dbReference type="EC" id="3.6.1.23" evidence="1"/>
<dbReference type="EMBL" id="AE008922">
    <property type="protein sequence ID" value="AAM43089.1"/>
    <property type="molecule type" value="Genomic_DNA"/>
</dbReference>
<dbReference type="RefSeq" id="NP_639198.1">
    <property type="nucleotide sequence ID" value="NC_003902.1"/>
</dbReference>
<dbReference type="SMR" id="Q8P458"/>
<dbReference type="STRING" id="190485.XCC3858"/>
<dbReference type="EnsemblBacteria" id="AAM43089">
    <property type="protein sequence ID" value="AAM43089"/>
    <property type="gene ID" value="XCC3858"/>
</dbReference>
<dbReference type="KEGG" id="xcc:XCC3858"/>
<dbReference type="PATRIC" id="fig|190485.4.peg.4127"/>
<dbReference type="eggNOG" id="COG0756">
    <property type="taxonomic scope" value="Bacteria"/>
</dbReference>
<dbReference type="HOGENOM" id="CLU_068508_1_1_6"/>
<dbReference type="OrthoDB" id="9809956at2"/>
<dbReference type="UniPathway" id="UPA00610">
    <property type="reaction ID" value="UER00666"/>
</dbReference>
<dbReference type="Proteomes" id="UP000001010">
    <property type="component" value="Chromosome"/>
</dbReference>
<dbReference type="GO" id="GO:0004170">
    <property type="term" value="F:dUTP diphosphatase activity"/>
    <property type="evidence" value="ECO:0000318"/>
    <property type="project" value="GO_Central"/>
</dbReference>
<dbReference type="GO" id="GO:0000287">
    <property type="term" value="F:magnesium ion binding"/>
    <property type="evidence" value="ECO:0000318"/>
    <property type="project" value="GO_Central"/>
</dbReference>
<dbReference type="GO" id="GO:0006226">
    <property type="term" value="P:dUMP biosynthetic process"/>
    <property type="evidence" value="ECO:0000318"/>
    <property type="project" value="GO_Central"/>
</dbReference>
<dbReference type="GO" id="GO:0046081">
    <property type="term" value="P:dUTP catabolic process"/>
    <property type="evidence" value="ECO:0000318"/>
    <property type="project" value="GO_Central"/>
</dbReference>
<dbReference type="CDD" id="cd07557">
    <property type="entry name" value="trimeric_dUTPase"/>
    <property type="match status" value="1"/>
</dbReference>
<dbReference type="FunFam" id="2.70.40.10:FF:000002">
    <property type="entry name" value="dUTP diphosphatase"/>
    <property type="match status" value="1"/>
</dbReference>
<dbReference type="Gene3D" id="2.70.40.10">
    <property type="match status" value="1"/>
</dbReference>
<dbReference type="HAMAP" id="MF_00116">
    <property type="entry name" value="dUTPase_bact"/>
    <property type="match status" value="1"/>
</dbReference>
<dbReference type="InterPro" id="IPR008181">
    <property type="entry name" value="dUTPase"/>
</dbReference>
<dbReference type="InterPro" id="IPR029054">
    <property type="entry name" value="dUTPase-like"/>
</dbReference>
<dbReference type="InterPro" id="IPR036157">
    <property type="entry name" value="dUTPase-like_sf"/>
</dbReference>
<dbReference type="InterPro" id="IPR033704">
    <property type="entry name" value="dUTPase_trimeric"/>
</dbReference>
<dbReference type="NCBIfam" id="TIGR00576">
    <property type="entry name" value="dut"/>
    <property type="match status" value="1"/>
</dbReference>
<dbReference type="NCBIfam" id="NF001862">
    <property type="entry name" value="PRK00601.1"/>
    <property type="match status" value="1"/>
</dbReference>
<dbReference type="PANTHER" id="PTHR11241">
    <property type="entry name" value="DEOXYURIDINE 5'-TRIPHOSPHATE NUCLEOTIDOHYDROLASE"/>
    <property type="match status" value="1"/>
</dbReference>
<dbReference type="PANTHER" id="PTHR11241:SF0">
    <property type="entry name" value="DEOXYURIDINE 5'-TRIPHOSPHATE NUCLEOTIDOHYDROLASE"/>
    <property type="match status" value="1"/>
</dbReference>
<dbReference type="Pfam" id="PF00692">
    <property type="entry name" value="dUTPase"/>
    <property type="match status" value="1"/>
</dbReference>
<dbReference type="SUPFAM" id="SSF51283">
    <property type="entry name" value="dUTPase-like"/>
    <property type="match status" value="1"/>
</dbReference>
<protein>
    <recommendedName>
        <fullName evidence="1">Deoxyuridine 5'-triphosphate nucleotidohydrolase</fullName>
        <shortName evidence="1">dUTPase</shortName>
        <ecNumber evidence="1">3.6.1.23</ecNumber>
    </recommendedName>
    <alternativeName>
        <fullName evidence="1">dUTP pyrophosphatase</fullName>
    </alternativeName>
</protein>
<keyword id="KW-0378">Hydrolase</keyword>
<keyword id="KW-0460">Magnesium</keyword>
<keyword id="KW-0479">Metal-binding</keyword>
<keyword id="KW-0546">Nucleotide metabolism</keyword>
<keyword id="KW-1185">Reference proteome</keyword>
<organism>
    <name type="scientific">Xanthomonas campestris pv. campestris (strain ATCC 33913 / DSM 3586 / NCPPB 528 / LMG 568 / P 25)</name>
    <dbReference type="NCBI Taxonomy" id="190485"/>
    <lineage>
        <taxon>Bacteria</taxon>
        <taxon>Pseudomonadati</taxon>
        <taxon>Pseudomonadota</taxon>
        <taxon>Gammaproteobacteria</taxon>
        <taxon>Lysobacterales</taxon>
        <taxon>Lysobacteraceae</taxon>
        <taxon>Xanthomonas</taxon>
    </lineage>
</organism>
<feature type="chain" id="PRO_0000182920" description="Deoxyuridine 5'-triphosphate nucleotidohydrolase">
    <location>
        <begin position="1"/>
        <end position="152"/>
    </location>
</feature>
<feature type="binding site" evidence="1">
    <location>
        <begin position="71"/>
        <end position="73"/>
    </location>
    <ligand>
        <name>substrate</name>
    </ligand>
</feature>
<feature type="binding site" evidence="1">
    <location>
        <position position="84"/>
    </location>
    <ligand>
        <name>substrate</name>
    </ligand>
</feature>
<feature type="binding site" evidence="1">
    <location>
        <begin position="88"/>
        <end position="90"/>
    </location>
    <ligand>
        <name>substrate</name>
    </ligand>
</feature>
<comment type="function">
    <text evidence="1">This enzyme is involved in nucleotide metabolism: it produces dUMP, the immediate precursor of thymidine nucleotides and it decreases the intracellular concentration of dUTP so that uracil cannot be incorporated into DNA.</text>
</comment>
<comment type="catalytic activity">
    <reaction evidence="1">
        <text>dUTP + H2O = dUMP + diphosphate + H(+)</text>
        <dbReference type="Rhea" id="RHEA:10248"/>
        <dbReference type="ChEBI" id="CHEBI:15377"/>
        <dbReference type="ChEBI" id="CHEBI:15378"/>
        <dbReference type="ChEBI" id="CHEBI:33019"/>
        <dbReference type="ChEBI" id="CHEBI:61555"/>
        <dbReference type="ChEBI" id="CHEBI:246422"/>
        <dbReference type="EC" id="3.6.1.23"/>
    </reaction>
</comment>
<comment type="cofactor">
    <cofactor evidence="1">
        <name>Mg(2+)</name>
        <dbReference type="ChEBI" id="CHEBI:18420"/>
    </cofactor>
</comment>
<comment type="pathway">
    <text evidence="1">Pyrimidine metabolism; dUMP biosynthesis; dUMP from dCTP (dUTP route): step 2/2.</text>
</comment>
<comment type="similarity">
    <text evidence="1">Belongs to the dUTPase family.</text>
</comment>
<gene>
    <name evidence="1" type="primary">dut</name>
    <name type="ordered locus">XCC3858</name>
</gene>
<name>DUT_XANCP</name>
<accession>Q8P458</accession>
<sequence>MTQSLQVKLLDPRFGDLWPLPAYATEASAGMDLRAALEAPMTLEPGDAALIPSGIAIHLDDPQVCAVILPRSGLGHRHGIVLGNGTGLIDADYQGPLLISTWNRGREAFTIEPGDRIAQLVILPIVRVSLQVVDTFVDSARGAGGFGHTGVR</sequence>
<proteinExistence type="inferred from homology"/>
<reference key="1">
    <citation type="journal article" date="2002" name="Nature">
        <title>Comparison of the genomes of two Xanthomonas pathogens with differing host specificities.</title>
        <authorList>
            <person name="da Silva A.C.R."/>
            <person name="Ferro J.A."/>
            <person name="Reinach F.C."/>
            <person name="Farah C.S."/>
            <person name="Furlan L.R."/>
            <person name="Quaggio R.B."/>
            <person name="Monteiro-Vitorello C.B."/>
            <person name="Van Sluys M.A."/>
            <person name="Almeida N.F. Jr."/>
            <person name="Alves L.M.C."/>
            <person name="do Amaral A.M."/>
            <person name="Bertolini M.C."/>
            <person name="Camargo L.E.A."/>
            <person name="Camarotte G."/>
            <person name="Cannavan F."/>
            <person name="Cardozo J."/>
            <person name="Chambergo F."/>
            <person name="Ciapina L.P."/>
            <person name="Cicarelli R.M.B."/>
            <person name="Coutinho L.L."/>
            <person name="Cursino-Santos J.R."/>
            <person name="El-Dorry H."/>
            <person name="Faria J.B."/>
            <person name="Ferreira A.J.S."/>
            <person name="Ferreira R.C.C."/>
            <person name="Ferro M.I.T."/>
            <person name="Formighieri E.F."/>
            <person name="Franco M.C."/>
            <person name="Greggio C.C."/>
            <person name="Gruber A."/>
            <person name="Katsuyama A.M."/>
            <person name="Kishi L.T."/>
            <person name="Leite R.P."/>
            <person name="Lemos E.G.M."/>
            <person name="Lemos M.V.F."/>
            <person name="Locali E.C."/>
            <person name="Machado M.A."/>
            <person name="Madeira A.M.B.N."/>
            <person name="Martinez-Rossi N.M."/>
            <person name="Martins E.C."/>
            <person name="Meidanis J."/>
            <person name="Menck C.F.M."/>
            <person name="Miyaki C.Y."/>
            <person name="Moon D.H."/>
            <person name="Moreira L.M."/>
            <person name="Novo M.T.M."/>
            <person name="Okura V.K."/>
            <person name="Oliveira M.C."/>
            <person name="Oliveira V.R."/>
            <person name="Pereira H.A."/>
            <person name="Rossi A."/>
            <person name="Sena J.A.D."/>
            <person name="Silva C."/>
            <person name="de Souza R.F."/>
            <person name="Spinola L.A.F."/>
            <person name="Takita M.A."/>
            <person name="Tamura R.E."/>
            <person name="Teixeira E.C."/>
            <person name="Tezza R.I.D."/>
            <person name="Trindade dos Santos M."/>
            <person name="Truffi D."/>
            <person name="Tsai S.M."/>
            <person name="White F.F."/>
            <person name="Setubal J.C."/>
            <person name="Kitajima J.P."/>
        </authorList>
    </citation>
    <scope>NUCLEOTIDE SEQUENCE [LARGE SCALE GENOMIC DNA]</scope>
    <source>
        <strain>ATCC 33913 / DSM 3586 / NCPPB 528 / LMG 568 / P 25</strain>
    </source>
</reference>
<evidence type="ECO:0000255" key="1">
    <source>
        <dbReference type="HAMAP-Rule" id="MF_00116"/>
    </source>
</evidence>